<organism>
    <name type="scientific">Rhodospirillum rubrum (strain ATCC 11170 / ATH 1.1.1 / DSM 467 / LMG 4362 / NCIMB 8255 / S1)</name>
    <dbReference type="NCBI Taxonomy" id="269796"/>
    <lineage>
        <taxon>Bacteria</taxon>
        <taxon>Pseudomonadati</taxon>
        <taxon>Pseudomonadota</taxon>
        <taxon>Alphaproteobacteria</taxon>
        <taxon>Rhodospirillales</taxon>
        <taxon>Rhodospirillaceae</taxon>
        <taxon>Rhodospirillum</taxon>
    </lineage>
</organism>
<gene>
    <name evidence="1" type="primary">clpP</name>
    <name type="ordered locus">Rru_A1550</name>
</gene>
<protein>
    <recommendedName>
        <fullName evidence="1">ATP-dependent Clp protease proteolytic subunit</fullName>
        <ecNumber evidence="1">3.4.21.92</ecNumber>
    </recommendedName>
    <alternativeName>
        <fullName evidence="1">Endopeptidase Clp</fullName>
    </alternativeName>
</protein>
<keyword id="KW-0963">Cytoplasm</keyword>
<keyword id="KW-0378">Hydrolase</keyword>
<keyword id="KW-0645">Protease</keyword>
<keyword id="KW-1185">Reference proteome</keyword>
<keyword id="KW-0720">Serine protease</keyword>
<comment type="function">
    <text evidence="1">Cleaves peptides in various proteins in a process that requires ATP hydrolysis. Has a chymotrypsin-like activity. Plays a major role in the degradation of misfolded proteins.</text>
</comment>
<comment type="catalytic activity">
    <reaction evidence="1">
        <text>Hydrolysis of proteins to small peptides in the presence of ATP and magnesium. alpha-casein is the usual test substrate. In the absence of ATP, only oligopeptides shorter than five residues are hydrolyzed (such as succinyl-Leu-Tyr-|-NHMec, and Leu-Tyr-Leu-|-Tyr-Trp, in which cleavage of the -Tyr-|-Leu- and -Tyr-|-Trp bonds also occurs).</text>
        <dbReference type="EC" id="3.4.21.92"/>
    </reaction>
</comment>
<comment type="subunit">
    <text evidence="1">Fourteen ClpP subunits assemble into 2 heptameric rings which stack back to back to give a disk-like structure with a central cavity, resembling the structure of eukaryotic proteasomes.</text>
</comment>
<comment type="subcellular location">
    <subcellularLocation>
        <location evidence="1">Cytoplasm</location>
    </subcellularLocation>
</comment>
<comment type="similarity">
    <text evidence="1">Belongs to the peptidase S14 family.</text>
</comment>
<feature type="chain" id="PRO_0000236401" description="ATP-dependent Clp protease proteolytic subunit">
    <location>
        <begin position="1"/>
        <end position="216"/>
    </location>
</feature>
<feature type="active site" description="Nucleophile" evidence="1">
    <location>
        <position position="109"/>
    </location>
</feature>
<feature type="active site" evidence="1">
    <location>
        <position position="134"/>
    </location>
</feature>
<sequence length="216" mass="23915">MIDRDPIDVFNNTLVPMVVEQTNRGERSYDIYSRLLKERIIFLTGQVHDGVASLICAQLLFLESENPSKDISFYINSPGGVVTSGMAIYDTMQYIRSPVSTVCIGQAASMGSLLLCAGEAGKRYATPNARIMIHQPSGGFQGQAADIEIQAREILALRERLNRIYVKHTGQPLETIERAMDRDNYMTAEESRAFGLTDSVIERRALSDDGDTKSSS</sequence>
<reference key="1">
    <citation type="journal article" date="2011" name="Stand. Genomic Sci.">
        <title>Complete genome sequence of Rhodospirillum rubrum type strain (S1).</title>
        <authorList>
            <person name="Munk A.C."/>
            <person name="Copeland A."/>
            <person name="Lucas S."/>
            <person name="Lapidus A."/>
            <person name="Del Rio T.G."/>
            <person name="Barry K."/>
            <person name="Detter J.C."/>
            <person name="Hammon N."/>
            <person name="Israni S."/>
            <person name="Pitluck S."/>
            <person name="Brettin T."/>
            <person name="Bruce D."/>
            <person name="Han C."/>
            <person name="Tapia R."/>
            <person name="Gilna P."/>
            <person name="Schmutz J."/>
            <person name="Larimer F."/>
            <person name="Land M."/>
            <person name="Kyrpides N.C."/>
            <person name="Mavromatis K."/>
            <person name="Richardson P."/>
            <person name="Rohde M."/>
            <person name="Goeker M."/>
            <person name="Klenk H.P."/>
            <person name="Zhang Y."/>
            <person name="Roberts G.P."/>
            <person name="Reslewic S."/>
            <person name="Schwartz D.C."/>
        </authorList>
    </citation>
    <scope>NUCLEOTIDE SEQUENCE [LARGE SCALE GENOMIC DNA]</scope>
    <source>
        <strain>ATCC 11170 / ATH 1.1.1 / DSM 467 / LMG 4362 / NCIMB 8255 / S1</strain>
    </source>
</reference>
<proteinExistence type="inferred from homology"/>
<dbReference type="EC" id="3.4.21.92" evidence="1"/>
<dbReference type="EMBL" id="CP000230">
    <property type="protein sequence ID" value="ABC22350.1"/>
    <property type="molecule type" value="Genomic_DNA"/>
</dbReference>
<dbReference type="RefSeq" id="WP_011389425.1">
    <property type="nucleotide sequence ID" value="NC_007643.1"/>
</dbReference>
<dbReference type="RefSeq" id="YP_426637.1">
    <property type="nucleotide sequence ID" value="NC_007643.1"/>
</dbReference>
<dbReference type="SMR" id="Q2RU45"/>
<dbReference type="STRING" id="269796.Rru_A1550"/>
<dbReference type="MEROPS" id="S14.001"/>
<dbReference type="EnsemblBacteria" id="ABC22350">
    <property type="protein sequence ID" value="ABC22350"/>
    <property type="gene ID" value="Rru_A1550"/>
</dbReference>
<dbReference type="KEGG" id="rru:Rru_A1550"/>
<dbReference type="PATRIC" id="fig|269796.9.peg.1620"/>
<dbReference type="eggNOG" id="COG0740">
    <property type="taxonomic scope" value="Bacteria"/>
</dbReference>
<dbReference type="HOGENOM" id="CLU_058707_3_2_5"/>
<dbReference type="PhylomeDB" id="Q2RU45"/>
<dbReference type="Proteomes" id="UP000001929">
    <property type="component" value="Chromosome"/>
</dbReference>
<dbReference type="GO" id="GO:0005737">
    <property type="term" value="C:cytoplasm"/>
    <property type="evidence" value="ECO:0007669"/>
    <property type="project" value="UniProtKB-SubCell"/>
</dbReference>
<dbReference type="GO" id="GO:0009368">
    <property type="term" value="C:endopeptidase Clp complex"/>
    <property type="evidence" value="ECO:0007669"/>
    <property type="project" value="TreeGrafter"/>
</dbReference>
<dbReference type="GO" id="GO:0004176">
    <property type="term" value="F:ATP-dependent peptidase activity"/>
    <property type="evidence" value="ECO:0007669"/>
    <property type="project" value="InterPro"/>
</dbReference>
<dbReference type="GO" id="GO:0051117">
    <property type="term" value="F:ATPase binding"/>
    <property type="evidence" value="ECO:0007669"/>
    <property type="project" value="TreeGrafter"/>
</dbReference>
<dbReference type="GO" id="GO:0004252">
    <property type="term" value="F:serine-type endopeptidase activity"/>
    <property type="evidence" value="ECO:0007669"/>
    <property type="project" value="UniProtKB-UniRule"/>
</dbReference>
<dbReference type="GO" id="GO:0006515">
    <property type="term" value="P:protein quality control for misfolded or incompletely synthesized proteins"/>
    <property type="evidence" value="ECO:0007669"/>
    <property type="project" value="TreeGrafter"/>
</dbReference>
<dbReference type="CDD" id="cd07017">
    <property type="entry name" value="S14_ClpP_2"/>
    <property type="match status" value="1"/>
</dbReference>
<dbReference type="FunFam" id="3.90.226.10:FF:000001">
    <property type="entry name" value="ATP-dependent Clp protease proteolytic subunit"/>
    <property type="match status" value="1"/>
</dbReference>
<dbReference type="Gene3D" id="3.90.226.10">
    <property type="entry name" value="2-enoyl-CoA Hydratase, Chain A, domain 1"/>
    <property type="match status" value="1"/>
</dbReference>
<dbReference type="HAMAP" id="MF_00444">
    <property type="entry name" value="ClpP"/>
    <property type="match status" value="1"/>
</dbReference>
<dbReference type="InterPro" id="IPR001907">
    <property type="entry name" value="ClpP"/>
</dbReference>
<dbReference type="InterPro" id="IPR029045">
    <property type="entry name" value="ClpP/crotonase-like_dom_sf"/>
</dbReference>
<dbReference type="InterPro" id="IPR023562">
    <property type="entry name" value="ClpP/TepA"/>
</dbReference>
<dbReference type="InterPro" id="IPR033135">
    <property type="entry name" value="ClpP_His_AS"/>
</dbReference>
<dbReference type="InterPro" id="IPR018215">
    <property type="entry name" value="ClpP_Ser_AS"/>
</dbReference>
<dbReference type="NCBIfam" id="TIGR00493">
    <property type="entry name" value="clpP"/>
    <property type="match status" value="1"/>
</dbReference>
<dbReference type="NCBIfam" id="NF001368">
    <property type="entry name" value="PRK00277.1"/>
    <property type="match status" value="1"/>
</dbReference>
<dbReference type="NCBIfam" id="NF009205">
    <property type="entry name" value="PRK12553.1"/>
    <property type="match status" value="1"/>
</dbReference>
<dbReference type="PANTHER" id="PTHR10381">
    <property type="entry name" value="ATP-DEPENDENT CLP PROTEASE PROTEOLYTIC SUBUNIT"/>
    <property type="match status" value="1"/>
</dbReference>
<dbReference type="PANTHER" id="PTHR10381:SF70">
    <property type="entry name" value="ATP-DEPENDENT CLP PROTEASE PROTEOLYTIC SUBUNIT"/>
    <property type="match status" value="1"/>
</dbReference>
<dbReference type="Pfam" id="PF00574">
    <property type="entry name" value="CLP_protease"/>
    <property type="match status" value="1"/>
</dbReference>
<dbReference type="PRINTS" id="PR00127">
    <property type="entry name" value="CLPPROTEASEP"/>
</dbReference>
<dbReference type="SUPFAM" id="SSF52096">
    <property type="entry name" value="ClpP/crotonase"/>
    <property type="match status" value="1"/>
</dbReference>
<dbReference type="PROSITE" id="PS00382">
    <property type="entry name" value="CLP_PROTEASE_HIS"/>
    <property type="match status" value="1"/>
</dbReference>
<dbReference type="PROSITE" id="PS00381">
    <property type="entry name" value="CLP_PROTEASE_SER"/>
    <property type="match status" value="1"/>
</dbReference>
<evidence type="ECO:0000255" key="1">
    <source>
        <dbReference type="HAMAP-Rule" id="MF_00444"/>
    </source>
</evidence>
<name>CLPP_RHORT</name>
<accession>Q2RU45</accession>